<reference key="1">
    <citation type="journal article" date="2000" name="Science">
        <title>The genome sequence of Drosophila melanogaster.</title>
        <authorList>
            <person name="Adams M.D."/>
            <person name="Celniker S.E."/>
            <person name="Holt R.A."/>
            <person name="Evans C.A."/>
            <person name="Gocayne J.D."/>
            <person name="Amanatides P.G."/>
            <person name="Scherer S.E."/>
            <person name="Li P.W."/>
            <person name="Hoskins R.A."/>
            <person name="Galle R.F."/>
            <person name="George R.A."/>
            <person name="Lewis S.E."/>
            <person name="Richards S."/>
            <person name="Ashburner M."/>
            <person name="Henderson S.N."/>
            <person name="Sutton G.G."/>
            <person name="Wortman J.R."/>
            <person name="Yandell M.D."/>
            <person name="Zhang Q."/>
            <person name="Chen L.X."/>
            <person name="Brandon R.C."/>
            <person name="Rogers Y.-H.C."/>
            <person name="Blazej R.G."/>
            <person name="Champe M."/>
            <person name="Pfeiffer B.D."/>
            <person name="Wan K.H."/>
            <person name="Doyle C."/>
            <person name="Baxter E.G."/>
            <person name="Helt G."/>
            <person name="Nelson C.R."/>
            <person name="Miklos G.L.G."/>
            <person name="Abril J.F."/>
            <person name="Agbayani A."/>
            <person name="An H.-J."/>
            <person name="Andrews-Pfannkoch C."/>
            <person name="Baldwin D."/>
            <person name="Ballew R.M."/>
            <person name="Basu A."/>
            <person name="Baxendale J."/>
            <person name="Bayraktaroglu L."/>
            <person name="Beasley E.M."/>
            <person name="Beeson K.Y."/>
            <person name="Benos P.V."/>
            <person name="Berman B.P."/>
            <person name="Bhandari D."/>
            <person name="Bolshakov S."/>
            <person name="Borkova D."/>
            <person name="Botchan M.R."/>
            <person name="Bouck J."/>
            <person name="Brokstein P."/>
            <person name="Brottier P."/>
            <person name="Burtis K.C."/>
            <person name="Busam D.A."/>
            <person name="Butler H."/>
            <person name="Cadieu E."/>
            <person name="Center A."/>
            <person name="Chandra I."/>
            <person name="Cherry J.M."/>
            <person name="Cawley S."/>
            <person name="Dahlke C."/>
            <person name="Davenport L.B."/>
            <person name="Davies P."/>
            <person name="de Pablos B."/>
            <person name="Delcher A."/>
            <person name="Deng Z."/>
            <person name="Mays A.D."/>
            <person name="Dew I."/>
            <person name="Dietz S.M."/>
            <person name="Dodson K."/>
            <person name="Doup L.E."/>
            <person name="Downes M."/>
            <person name="Dugan-Rocha S."/>
            <person name="Dunkov B.C."/>
            <person name="Dunn P."/>
            <person name="Durbin K.J."/>
            <person name="Evangelista C.C."/>
            <person name="Ferraz C."/>
            <person name="Ferriera S."/>
            <person name="Fleischmann W."/>
            <person name="Fosler C."/>
            <person name="Gabrielian A.E."/>
            <person name="Garg N.S."/>
            <person name="Gelbart W.M."/>
            <person name="Glasser K."/>
            <person name="Glodek A."/>
            <person name="Gong F."/>
            <person name="Gorrell J.H."/>
            <person name="Gu Z."/>
            <person name="Guan P."/>
            <person name="Harris M."/>
            <person name="Harris N.L."/>
            <person name="Harvey D.A."/>
            <person name="Heiman T.J."/>
            <person name="Hernandez J.R."/>
            <person name="Houck J."/>
            <person name="Hostin D."/>
            <person name="Houston K.A."/>
            <person name="Howland T.J."/>
            <person name="Wei M.-H."/>
            <person name="Ibegwam C."/>
            <person name="Jalali M."/>
            <person name="Kalush F."/>
            <person name="Karpen G.H."/>
            <person name="Ke Z."/>
            <person name="Kennison J.A."/>
            <person name="Ketchum K.A."/>
            <person name="Kimmel B.E."/>
            <person name="Kodira C.D."/>
            <person name="Kraft C.L."/>
            <person name="Kravitz S."/>
            <person name="Kulp D."/>
            <person name="Lai Z."/>
            <person name="Lasko P."/>
            <person name="Lei Y."/>
            <person name="Levitsky A.A."/>
            <person name="Li J.H."/>
            <person name="Li Z."/>
            <person name="Liang Y."/>
            <person name="Lin X."/>
            <person name="Liu X."/>
            <person name="Mattei B."/>
            <person name="McIntosh T.C."/>
            <person name="McLeod M.P."/>
            <person name="McPherson D."/>
            <person name="Merkulov G."/>
            <person name="Milshina N.V."/>
            <person name="Mobarry C."/>
            <person name="Morris J."/>
            <person name="Moshrefi A."/>
            <person name="Mount S.M."/>
            <person name="Moy M."/>
            <person name="Murphy B."/>
            <person name="Murphy L."/>
            <person name="Muzny D.M."/>
            <person name="Nelson D.L."/>
            <person name="Nelson D.R."/>
            <person name="Nelson K.A."/>
            <person name="Nixon K."/>
            <person name="Nusskern D.R."/>
            <person name="Pacleb J.M."/>
            <person name="Palazzolo M."/>
            <person name="Pittman G.S."/>
            <person name="Pan S."/>
            <person name="Pollard J."/>
            <person name="Puri V."/>
            <person name="Reese M.G."/>
            <person name="Reinert K."/>
            <person name="Remington K."/>
            <person name="Saunders R.D.C."/>
            <person name="Scheeler F."/>
            <person name="Shen H."/>
            <person name="Shue B.C."/>
            <person name="Siden-Kiamos I."/>
            <person name="Simpson M."/>
            <person name="Skupski M.P."/>
            <person name="Smith T.J."/>
            <person name="Spier E."/>
            <person name="Spradling A.C."/>
            <person name="Stapleton M."/>
            <person name="Strong R."/>
            <person name="Sun E."/>
            <person name="Svirskas R."/>
            <person name="Tector C."/>
            <person name="Turner R."/>
            <person name="Venter E."/>
            <person name="Wang A.H."/>
            <person name="Wang X."/>
            <person name="Wang Z.-Y."/>
            <person name="Wassarman D.A."/>
            <person name="Weinstock G.M."/>
            <person name="Weissenbach J."/>
            <person name="Williams S.M."/>
            <person name="Woodage T."/>
            <person name="Worley K.C."/>
            <person name="Wu D."/>
            <person name="Yang S."/>
            <person name="Yao Q.A."/>
            <person name="Ye J."/>
            <person name="Yeh R.-F."/>
            <person name="Zaveri J.S."/>
            <person name="Zhan M."/>
            <person name="Zhang G."/>
            <person name="Zhao Q."/>
            <person name="Zheng L."/>
            <person name="Zheng X.H."/>
            <person name="Zhong F.N."/>
            <person name="Zhong W."/>
            <person name="Zhou X."/>
            <person name="Zhu S.C."/>
            <person name="Zhu X."/>
            <person name="Smith H.O."/>
            <person name="Gibbs R.A."/>
            <person name="Myers E.W."/>
            <person name="Rubin G.M."/>
            <person name="Venter J.C."/>
        </authorList>
    </citation>
    <scope>NUCLEOTIDE SEQUENCE [LARGE SCALE GENOMIC DNA]</scope>
    <source>
        <strain>Berkeley</strain>
    </source>
</reference>
<reference key="2">
    <citation type="journal article" date="2002" name="Genome Biol.">
        <title>Annotation of the Drosophila melanogaster euchromatic genome: a systematic review.</title>
        <authorList>
            <person name="Misra S."/>
            <person name="Crosby M.A."/>
            <person name="Mungall C.J."/>
            <person name="Matthews B.B."/>
            <person name="Campbell K.S."/>
            <person name="Hradecky P."/>
            <person name="Huang Y."/>
            <person name="Kaminker J.S."/>
            <person name="Millburn G.H."/>
            <person name="Prochnik S.E."/>
            <person name="Smith C.D."/>
            <person name="Tupy J.L."/>
            <person name="Whitfield E.J."/>
            <person name="Bayraktaroglu L."/>
            <person name="Berman B.P."/>
            <person name="Bettencourt B.R."/>
            <person name="Celniker S.E."/>
            <person name="de Grey A.D.N.J."/>
            <person name="Drysdale R.A."/>
            <person name="Harris N.L."/>
            <person name="Richter J."/>
            <person name="Russo S."/>
            <person name="Schroeder A.J."/>
            <person name="Shu S.Q."/>
            <person name="Stapleton M."/>
            <person name="Yamada C."/>
            <person name="Ashburner M."/>
            <person name="Gelbart W.M."/>
            <person name="Rubin G.M."/>
            <person name="Lewis S.E."/>
        </authorList>
    </citation>
    <scope>GENOME REANNOTATION</scope>
    <source>
        <strain>Berkeley</strain>
    </source>
</reference>
<dbReference type="EMBL" id="AE014134">
    <property type="protein sequence ID" value="AAF53606.1"/>
    <property type="molecule type" value="Genomic_DNA"/>
</dbReference>
<dbReference type="RefSeq" id="NP_609836.1">
    <property type="nucleotide sequence ID" value="NM_135992.4"/>
</dbReference>
<dbReference type="PDB" id="9MU9">
    <property type="method" value="EM"/>
    <property type="resolution" value="7.80 A"/>
    <property type="chains" value="K=1-116"/>
</dbReference>
<dbReference type="PDBsum" id="9MU9"/>
<dbReference type="EMDB" id="EMD-48626"/>
<dbReference type="SMR" id="Q9VJE4"/>
<dbReference type="BioGRID" id="61039">
    <property type="interactions" value="5"/>
</dbReference>
<dbReference type="ComplexPortal" id="CPX-2625">
    <property type="entry name" value="DNA-directed RNA polymerase II complex"/>
</dbReference>
<dbReference type="DIP" id="DIP-20854N"/>
<dbReference type="FunCoup" id="Q9VJE4">
    <property type="interactions" value="990"/>
</dbReference>
<dbReference type="IntAct" id="Q9VJE4">
    <property type="interactions" value="3"/>
</dbReference>
<dbReference type="STRING" id="7227.FBpp0080564"/>
<dbReference type="PaxDb" id="7227-FBpp0080564"/>
<dbReference type="DNASU" id="35043"/>
<dbReference type="EnsemblMetazoa" id="FBtr0081011">
    <property type="protein sequence ID" value="FBpp0080564"/>
    <property type="gene ID" value="FBgn0032634"/>
</dbReference>
<dbReference type="GeneID" id="35043"/>
<dbReference type="KEGG" id="dme:Dmel_CG6840"/>
<dbReference type="UCSC" id="CG6840-RA">
    <property type="organism name" value="d. melanogaster"/>
</dbReference>
<dbReference type="AGR" id="FB:FBgn0032634"/>
<dbReference type="CTD" id="5439"/>
<dbReference type="FlyBase" id="FBgn0032634">
    <property type="gene designation" value="Polr2J"/>
</dbReference>
<dbReference type="VEuPathDB" id="VectorBase:FBgn0032634"/>
<dbReference type="eggNOG" id="KOG4392">
    <property type="taxonomic scope" value="Eukaryota"/>
</dbReference>
<dbReference type="GeneTree" id="ENSGT00550000074975"/>
<dbReference type="HOGENOM" id="CLU_090381_2_2_1"/>
<dbReference type="InParanoid" id="Q9VJE4"/>
<dbReference type="OMA" id="MNAPSRY"/>
<dbReference type="OrthoDB" id="10248581at2759"/>
<dbReference type="PhylomeDB" id="Q9VJE4"/>
<dbReference type="Reactome" id="R-DME-112382">
    <property type="pathway name" value="Formation of RNA Pol II elongation complex"/>
</dbReference>
<dbReference type="Reactome" id="R-DME-113418">
    <property type="pathway name" value="Formation of the Early Elongation Complex"/>
</dbReference>
<dbReference type="Reactome" id="R-DME-5578749">
    <property type="pathway name" value="Transcriptional regulation by small RNAs"/>
</dbReference>
<dbReference type="Reactome" id="R-DME-674695">
    <property type="pathway name" value="RNA Polymerase II Pre-transcription Events"/>
</dbReference>
<dbReference type="Reactome" id="R-DME-6781823">
    <property type="pathway name" value="Formation of TC-NER Pre-Incision Complex"/>
</dbReference>
<dbReference type="Reactome" id="R-DME-6782135">
    <property type="pathway name" value="Dual incision in TC-NER"/>
</dbReference>
<dbReference type="Reactome" id="R-DME-6782210">
    <property type="pathway name" value="Gap-filling DNA repair synthesis and ligation in TC-NER"/>
</dbReference>
<dbReference type="Reactome" id="R-DME-6796648">
    <property type="pathway name" value="TP53 Regulates Transcription of DNA Repair Genes"/>
</dbReference>
<dbReference type="Reactome" id="R-DME-6807505">
    <property type="pathway name" value="RNA polymerase II transcribes snRNA genes"/>
</dbReference>
<dbReference type="Reactome" id="R-DME-72086">
    <property type="pathway name" value="mRNA Capping"/>
</dbReference>
<dbReference type="Reactome" id="R-DME-72163">
    <property type="pathway name" value="mRNA Splicing - Major Pathway"/>
</dbReference>
<dbReference type="Reactome" id="R-DME-72165">
    <property type="pathway name" value="mRNA Splicing - Minor Pathway"/>
</dbReference>
<dbReference type="Reactome" id="R-DME-72203">
    <property type="pathway name" value="Processing of Capped Intron-Containing Pre-mRNA"/>
</dbReference>
<dbReference type="Reactome" id="R-DME-73776">
    <property type="pathway name" value="RNA Polymerase II Promoter Escape"/>
</dbReference>
<dbReference type="Reactome" id="R-DME-73779">
    <property type="pathway name" value="RNA Polymerase II Transcription Pre-Initiation And Promoter Opening"/>
</dbReference>
<dbReference type="Reactome" id="R-DME-75953">
    <property type="pathway name" value="RNA Polymerase II Transcription Initiation"/>
</dbReference>
<dbReference type="Reactome" id="R-DME-75955">
    <property type="pathway name" value="RNA Polymerase II Transcription Elongation"/>
</dbReference>
<dbReference type="Reactome" id="R-DME-76042">
    <property type="pathway name" value="RNA Polymerase II Transcription Initiation And Promoter Clearance"/>
</dbReference>
<dbReference type="Reactome" id="R-DME-77075">
    <property type="pathway name" value="RNA Pol II CTD phosphorylation and interaction with CE"/>
</dbReference>
<dbReference type="Reactome" id="R-DME-9018519">
    <property type="pathway name" value="Estrogen-dependent gene expression"/>
</dbReference>
<dbReference type="BioGRID-ORCS" id="35043">
    <property type="hits" value="1 hit in 3 CRISPR screens"/>
</dbReference>
<dbReference type="GenomeRNAi" id="35043"/>
<dbReference type="PRO" id="PR:Q9VJE4"/>
<dbReference type="Proteomes" id="UP000000803">
    <property type="component" value="Chromosome 2L"/>
</dbReference>
<dbReference type="Bgee" id="FBgn0032634">
    <property type="expression patterns" value="Expressed in adult class III enteroendocrine cell in adult midgut (Drosophila) and 118 other cell types or tissues"/>
</dbReference>
<dbReference type="ExpressionAtlas" id="Q9VJE4">
    <property type="expression patterns" value="baseline and differential"/>
</dbReference>
<dbReference type="GO" id="GO:0005665">
    <property type="term" value="C:RNA polymerase II, core complex"/>
    <property type="evidence" value="ECO:0000250"/>
    <property type="project" value="FlyBase"/>
</dbReference>
<dbReference type="GO" id="GO:0003677">
    <property type="term" value="F:DNA binding"/>
    <property type="evidence" value="ECO:0007669"/>
    <property type="project" value="InterPro"/>
</dbReference>
<dbReference type="GO" id="GO:0003899">
    <property type="term" value="F:DNA-directed RNA polymerase activity"/>
    <property type="evidence" value="ECO:0007669"/>
    <property type="project" value="InterPro"/>
</dbReference>
<dbReference type="GO" id="GO:0046983">
    <property type="term" value="F:protein dimerization activity"/>
    <property type="evidence" value="ECO:0007669"/>
    <property type="project" value="InterPro"/>
</dbReference>
<dbReference type="GO" id="GO:0006366">
    <property type="term" value="P:transcription by RNA polymerase II"/>
    <property type="evidence" value="ECO:0000250"/>
    <property type="project" value="FlyBase"/>
</dbReference>
<dbReference type="CDD" id="cd06926">
    <property type="entry name" value="RNAP_II_RPB11"/>
    <property type="match status" value="1"/>
</dbReference>
<dbReference type="FunFam" id="3.30.1360.10:FF:000003">
    <property type="entry name" value="DNA-directed RNA polymerase II subunit RPB11"/>
    <property type="match status" value="1"/>
</dbReference>
<dbReference type="Gene3D" id="3.30.1360.10">
    <property type="entry name" value="RNA polymerase, RBP11-like subunit"/>
    <property type="match status" value="1"/>
</dbReference>
<dbReference type="HAMAP" id="MF_00261">
    <property type="entry name" value="RNApol_arch_Rpo11"/>
    <property type="match status" value="1"/>
</dbReference>
<dbReference type="InterPro" id="IPR037685">
    <property type="entry name" value="RBP11"/>
</dbReference>
<dbReference type="InterPro" id="IPR036603">
    <property type="entry name" value="RBP11-like"/>
</dbReference>
<dbReference type="InterPro" id="IPR009025">
    <property type="entry name" value="RBP11-like_dimer"/>
</dbReference>
<dbReference type="InterPro" id="IPR008193">
    <property type="entry name" value="RNA_pol_Rpb11_13-16kDa_CS"/>
</dbReference>
<dbReference type="InterPro" id="IPR022905">
    <property type="entry name" value="Rpo11-like"/>
</dbReference>
<dbReference type="PANTHER" id="PTHR13946">
    <property type="entry name" value="DNA-DIRECTED RNA POLYMERASE I,II,III"/>
    <property type="match status" value="1"/>
</dbReference>
<dbReference type="PANTHER" id="PTHR13946:SF16">
    <property type="entry name" value="DNA-DIRECTED RNA POLYMERASE II SUBUNIT RPB11"/>
    <property type="match status" value="1"/>
</dbReference>
<dbReference type="Pfam" id="PF13656">
    <property type="entry name" value="RNA_pol_L_2"/>
    <property type="match status" value="1"/>
</dbReference>
<dbReference type="SUPFAM" id="SSF55257">
    <property type="entry name" value="RBP11-like subunits of RNA polymerase"/>
    <property type="match status" value="1"/>
</dbReference>
<dbReference type="PROSITE" id="PS01154">
    <property type="entry name" value="RNA_POL_L_13KD"/>
    <property type="match status" value="1"/>
</dbReference>
<comment type="function">
    <text evidence="1">DNA-dependent RNA polymerase catalyzes the transcription of DNA into RNA using the four ribonucleoside triphosphates as substrates. Component of RNA polymerase II which synthesizes mRNA precursors and many functional non-coding RNAs. Pol II is the central component of the basal RNA polymerase II transcription machinery. It is composed of mobile elements that move relative to each other. RPB11 is part of the core element with the central large cleft (By similarity).</text>
</comment>
<comment type="subunit">
    <text evidence="1">Component of the RNA polymerase II (Pol II) complex consisting of 12 subunits.</text>
</comment>
<comment type="interaction">
    <interactant intactId="EBI-86422">
        <id>Q9VJE4</id>
    </interactant>
    <interactant intactId="EBI-162272">
        <id>O97183</id>
        <label>Polr2C</label>
    </interactant>
    <organismsDiffer>false</organismsDiffer>
    <experiments>3</experiments>
</comment>
<comment type="subcellular location">
    <subcellularLocation>
        <location evidence="1">Nucleus</location>
    </subcellularLocation>
</comment>
<comment type="similarity">
    <text evidence="2">Belongs to the archaeal Rpo11/eukaryotic RPB11/RPC19 RNA polymerase subunit family.</text>
</comment>
<proteinExistence type="evidence at protein level"/>
<evidence type="ECO:0000250" key="1"/>
<evidence type="ECO:0000305" key="2"/>
<evidence type="ECO:0000312" key="3">
    <source>
        <dbReference type="FlyBase" id="FBgn0032634"/>
    </source>
</evidence>
<organism>
    <name type="scientific">Drosophila melanogaster</name>
    <name type="common">Fruit fly</name>
    <dbReference type="NCBI Taxonomy" id="7227"/>
    <lineage>
        <taxon>Eukaryota</taxon>
        <taxon>Metazoa</taxon>
        <taxon>Ecdysozoa</taxon>
        <taxon>Arthropoda</taxon>
        <taxon>Hexapoda</taxon>
        <taxon>Insecta</taxon>
        <taxon>Pterygota</taxon>
        <taxon>Neoptera</taxon>
        <taxon>Endopterygota</taxon>
        <taxon>Diptera</taxon>
        <taxon>Brachycera</taxon>
        <taxon>Muscomorpha</taxon>
        <taxon>Ephydroidea</taxon>
        <taxon>Drosophilidae</taxon>
        <taxon>Drosophila</taxon>
        <taxon>Sophophora</taxon>
    </lineage>
</organism>
<feature type="chain" id="PRO_0000149312" description="DNA-directed RNA polymerase II subunit RPB11">
    <location>
        <begin position="1"/>
        <end position="117"/>
    </location>
</feature>
<keyword id="KW-0002">3D-structure</keyword>
<keyword id="KW-0240">DNA-directed RNA polymerase</keyword>
<keyword id="KW-0539">Nucleus</keyword>
<keyword id="KW-1185">Reference proteome</keyword>
<keyword id="KW-0804">Transcription</keyword>
<gene>
    <name evidence="3" type="primary">Polr2J</name>
    <name evidence="3" type="synonym">Rpb11</name>
    <name evidence="3" type="ORF">CG6840</name>
</gene>
<sequence>MNAPPTFESFLLYEGEKKIIKELDTKVTNAAIFTINKEDHTLGNMIRNQLLKDPNVLFAGYKVPHPLEHKFVIRIQTTADYSPQEAFMNAITDLLAELSLFEERFKDAIKEKKEGGD</sequence>
<protein>
    <recommendedName>
        <fullName>DNA-directed RNA polymerase II subunit RPB11</fullName>
        <shortName>RNA polymerase II subunit B11</shortName>
    </recommendedName>
    <alternativeName>
        <fullName>DNA-directed RNA polymerase II 13.3 kDa polypeptide</fullName>
    </alternativeName>
    <alternativeName>
        <fullName>DNA-directed RNA polymerase II subunit J</fullName>
    </alternativeName>
</protein>
<accession>Q9VJE4</accession>
<name>RPB11_DROME</name>